<comment type="function">
    <text evidence="1">Catalyzes the thiamine diphosphate-dependent decarboxylation of 2-oxoglutarate and the subsequent addition of the resulting succinic semialdehyde-thiamine pyrophosphate anion to isochorismate to yield 2-succinyl-5-enolpyruvyl-6-hydroxy-3-cyclohexene-1-carboxylate (SEPHCHC).</text>
</comment>
<comment type="catalytic activity">
    <reaction evidence="1">
        <text>isochorismate + 2-oxoglutarate + H(+) = 5-enolpyruvoyl-6-hydroxy-2-succinyl-cyclohex-3-ene-1-carboxylate + CO2</text>
        <dbReference type="Rhea" id="RHEA:25593"/>
        <dbReference type="ChEBI" id="CHEBI:15378"/>
        <dbReference type="ChEBI" id="CHEBI:16526"/>
        <dbReference type="ChEBI" id="CHEBI:16810"/>
        <dbReference type="ChEBI" id="CHEBI:29780"/>
        <dbReference type="ChEBI" id="CHEBI:58818"/>
        <dbReference type="EC" id="2.2.1.9"/>
    </reaction>
</comment>
<comment type="cofactor">
    <cofactor evidence="1">
        <name>Mg(2+)</name>
        <dbReference type="ChEBI" id="CHEBI:18420"/>
    </cofactor>
    <cofactor evidence="1">
        <name>Mn(2+)</name>
        <dbReference type="ChEBI" id="CHEBI:29035"/>
    </cofactor>
</comment>
<comment type="cofactor">
    <cofactor evidence="1">
        <name>thiamine diphosphate</name>
        <dbReference type="ChEBI" id="CHEBI:58937"/>
    </cofactor>
    <text evidence="1">Binds 1 thiamine pyrophosphate per subunit.</text>
</comment>
<comment type="pathway">
    <text evidence="1">Quinol/quinone metabolism; 1,4-dihydroxy-2-naphthoate biosynthesis; 1,4-dihydroxy-2-naphthoate from chorismate: step 2/7.</text>
</comment>
<comment type="pathway">
    <text evidence="1">Quinol/quinone metabolism; menaquinone biosynthesis.</text>
</comment>
<comment type="subunit">
    <text evidence="1">Homodimer.</text>
</comment>
<comment type="similarity">
    <text evidence="1">Belongs to the TPP enzyme family. MenD subfamily.</text>
</comment>
<reference key="1">
    <citation type="journal article" date="2009" name="J. Bacteriol.">
        <title>Complete genome sequence and comparative genome analysis of enteropathogenic Escherichia coli O127:H6 strain E2348/69.</title>
        <authorList>
            <person name="Iguchi A."/>
            <person name="Thomson N.R."/>
            <person name="Ogura Y."/>
            <person name="Saunders D."/>
            <person name="Ooka T."/>
            <person name="Henderson I.R."/>
            <person name="Harris D."/>
            <person name="Asadulghani M."/>
            <person name="Kurokawa K."/>
            <person name="Dean P."/>
            <person name="Kenny B."/>
            <person name="Quail M.A."/>
            <person name="Thurston S."/>
            <person name="Dougan G."/>
            <person name="Hayashi T."/>
            <person name="Parkhill J."/>
            <person name="Frankel G."/>
        </authorList>
    </citation>
    <scope>NUCLEOTIDE SEQUENCE [LARGE SCALE GENOMIC DNA]</scope>
    <source>
        <strain>E2348/69 / EPEC</strain>
    </source>
</reference>
<feature type="chain" id="PRO_1000187067" description="2-succinyl-5-enolpyruvyl-6-hydroxy-3-cyclohexene-1-carboxylate synthase">
    <location>
        <begin position="1"/>
        <end position="556"/>
    </location>
</feature>
<keyword id="KW-0460">Magnesium</keyword>
<keyword id="KW-0464">Manganese</keyword>
<keyword id="KW-0474">Menaquinone biosynthesis</keyword>
<keyword id="KW-0479">Metal-binding</keyword>
<keyword id="KW-1185">Reference proteome</keyword>
<keyword id="KW-0786">Thiamine pyrophosphate</keyword>
<keyword id="KW-0808">Transferase</keyword>
<proteinExistence type="inferred from homology"/>
<gene>
    <name evidence="1" type="primary">menD</name>
    <name type="ordered locus">E2348C_2409</name>
</gene>
<evidence type="ECO:0000255" key="1">
    <source>
        <dbReference type="HAMAP-Rule" id="MF_01659"/>
    </source>
</evidence>
<protein>
    <recommendedName>
        <fullName evidence="1">2-succinyl-5-enolpyruvyl-6-hydroxy-3-cyclohexene-1-carboxylate synthase</fullName>
        <shortName evidence="1">SEPHCHC synthase</shortName>
        <ecNumber evidence="1">2.2.1.9</ecNumber>
    </recommendedName>
    <alternativeName>
        <fullName evidence="1">Menaquinone biosynthesis protein MenD</fullName>
    </alternativeName>
</protein>
<name>MEND_ECO27</name>
<accession>B7UFS7</accession>
<sequence length="556" mass="61330">MSVSAFNRRWAAVILEALTRHGVRHICIAPGSRSTPLTLAAAENSAFIHHTHFDERGLGHLALGLAKVSKQPVAVIVTSGTAVANLYPALIEAGLTGEKLILLTADRPPELIDCGANQAIRQPGMFASHPTHSISLPRPTQDIPARWLVSTIDHALGTLHAGGVHINCPFAEPLYGEMDDTGISWQQRLGDWWQDDKPWLREAPHRESEKQRDWFFWRQKRGVVVAGRMSAEEGKKVALWAQTLGWPLIGDVLSQTGQPLPCADLWLGNAKATSELQQAQIVVQLGSSLTGKRLLQWQASCEPEEYWIVDDIEGRLDPAHHRGRRLIANIADWLELHPAEKRQPWCVEIPRLAEQAMQAVIARRDAFGEAQLAHRISDYLPEQGQLFVGNSLVVRLIDALSQLPAGYPVYSNRGASGIDGLLSTAAGVQRASGKPTLAIVGDLSALYDLNALALLRQVSAPLVLIVVNNNGGQIFSLLPTPKSERERFYLMPQNVHFEHAAAMFELKYHSPQNWQELETTLVDAWRTPTTTVIEMVVNDTDGAQTLQQLLAQVSHL</sequence>
<organism>
    <name type="scientific">Escherichia coli O127:H6 (strain E2348/69 / EPEC)</name>
    <dbReference type="NCBI Taxonomy" id="574521"/>
    <lineage>
        <taxon>Bacteria</taxon>
        <taxon>Pseudomonadati</taxon>
        <taxon>Pseudomonadota</taxon>
        <taxon>Gammaproteobacteria</taxon>
        <taxon>Enterobacterales</taxon>
        <taxon>Enterobacteriaceae</taxon>
        <taxon>Escherichia</taxon>
    </lineage>
</organism>
<dbReference type="EC" id="2.2.1.9" evidence="1"/>
<dbReference type="EMBL" id="FM180568">
    <property type="protein sequence ID" value="CAS09957.1"/>
    <property type="molecule type" value="Genomic_DNA"/>
</dbReference>
<dbReference type="RefSeq" id="WP_001339807.1">
    <property type="nucleotide sequence ID" value="NC_011601.1"/>
</dbReference>
<dbReference type="SMR" id="B7UFS7"/>
<dbReference type="KEGG" id="ecg:E2348C_2409"/>
<dbReference type="HOGENOM" id="CLU_006051_3_0_6"/>
<dbReference type="UniPathway" id="UPA00079"/>
<dbReference type="UniPathway" id="UPA01057">
    <property type="reaction ID" value="UER00164"/>
</dbReference>
<dbReference type="Proteomes" id="UP000008205">
    <property type="component" value="Chromosome"/>
</dbReference>
<dbReference type="GO" id="GO:0070204">
    <property type="term" value="F:2-succinyl-5-enolpyruvyl-6-hydroxy-3-cyclohexene-1-carboxylic-acid synthase activity"/>
    <property type="evidence" value="ECO:0007669"/>
    <property type="project" value="UniProtKB-UniRule"/>
</dbReference>
<dbReference type="GO" id="GO:0000287">
    <property type="term" value="F:magnesium ion binding"/>
    <property type="evidence" value="ECO:0007669"/>
    <property type="project" value="UniProtKB-UniRule"/>
</dbReference>
<dbReference type="GO" id="GO:0030145">
    <property type="term" value="F:manganese ion binding"/>
    <property type="evidence" value="ECO:0007669"/>
    <property type="project" value="UniProtKB-UniRule"/>
</dbReference>
<dbReference type="GO" id="GO:0030976">
    <property type="term" value="F:thiamine pyrophosphate binding"/>
    <property type="evidence" value="ECO:0007669"/>
    <property type="project" value="UniProtKB-UniRule"/>
</dbReference>
<dbReference type="GO" id="GO:0009234">
    <property type="term" value="P:menaquinone biosynthetic process"/>
    <property type="evidence" value="ECO:0007669"/>
    <property type="project" value="UniProtKB-UniRule"/>
</dbReference>
<dbReference type="CDD" id="cd07037">
    <property type="entry name" value="TPP_PYR_MenD"/>
    <property type="match status" value="1"/>
</dbReference>
<dbReference type="CDD" id="cd02009">
    <property type="entry name" value="TPP_SHCHC_synthase"/>
    <property type="match status" value="1"/>
</dbReference>
<dbReference type="FunFam" id="3.40.50.1220:FF:000010">
    <property type="entry name" value="2-succinyl-5-enolpyruvyl-6-hydroxy-3-cyclohexene-1-carboxylate synthase"/>
    <property type="match status" value="1"/>
</dbReference>
<dbReference type="FunFam" id="3.40.50.970:FF:000029">
    <property type="entry name" value="2-succinyl-5-enolpyruvyl-6-hydroxy-3-cyclohexene-1-carboxylate synthase"/>
    <property type="match status" value="1"/>
</dbReference>
<dbReference type="Gene3D" id="3.40.50.970">
    <property type="match status" value="2"/>
</dbReference>
<dbReference type="Gene3D" id="3.40.50.1220">
    <property type="entry name" value="TPP-binding domain"/>
    <property type="match status" value="1"/>
</dbReference>
<dbReference type="HAMAP" id="MF_01659">
    <property type="entry name" value="MenD"/>
    <property type="match status" value="1"/>
</dbReference>
<dbReference type="InterPro" id="IPR004433">
    <property type="entry name" value="MenaQ_synth_MenD"/>
</dbReference>
<dbReference type="InterPro" id="IPR032264">
    <property type="entry name" value="MenD_middle"/>
</dbReference>
<dbReference type="InterPro" id="IPR029061">
    <property type="entry name" value="THDP-binding"/>
</dbReference>
<dbReference type="InterPro" id="IPR012001">
    <property type="entry name" value="Thiamin_PyroP_enz_TPP-bd_dom"/>
</dbReference>
<dbReference type="InterPro" id="IPR011766">
    <property type="entry name" value="TPP_enzyme_TPP-bd"/>
</dbReference>
<dbReference type="NCBIfam" id="TIGR00173">
    <property type="entry name" value="menD"/>
    <property type="match status" value="1"/>
</dbReference>
<dbReference type="PANTHER" id="PTHR42916">
    <property type="entry name" value="2-SUCCINYL-5-ENOLPYRUVYL-6-HYDROXY-3-CYCLOHEXENE-1-CARBOXYLATE SYNTHASE"/>
    <property type="match status" value="1"/>
</dbReference>
<dbReference type="PANTHER" id="PTHR42916:SF1">
    <property type="entry name" value="PROTEIN PHYLLO, CHLOROPLASTIC"/>
    <property type="match status" value="1"/>
</dbReference>
<dbReference type="Pfam" id="PF02775">
    <property type="entry name" value="TPP_enzyme_C"/>
    <property type="match status" value="1"/>
</dbReference>
<dbReference type="Pfam" id="PF16582">
    <property type="entry name" value="TPP_enzyme_M_2"/>
    <property type="match status" value="1"/>
</dbReference>
<dbReference type="Pfam" id="PF02776">
    <property type="entry name" value="TPP_enzyme_N"/>
    <property type="match status" value="1"/>
</dbReference>
<dbReference type="PIRSF" id="PIRSF004983">
    <property type="entry name" value="MenD"/>
    <property type="match status" value="1"/>
</dbReference>
<dbReference type="SUPFAM" id="SSF52518">
    <property type="entry name" value="Thiamin diphosphate-binding fold (THDP-binding)"/>
    <property type="match status" value="2"/>
</dbReference>